<comment type="function">
    <text evidence="1">Na(+)/H(+) antiporter that extrudes sodium in exchange for external protons.</text>
</comment>
<comment type="catalytic activity">
    <reaction evidence="1">
        <text>Na(+)(in) + 2 H(+)(out) = Na(+)(out) + 2 H(+)(in)</text>
        <dbReference type="Rhea" id="RHEA:29251"/>
        <dbReference type="ChEBI" id="CHEBI:15378"/>
        <dbReference type="ChEBI" id="CHEBI:29101"/>
    </reaction>
    <physiologicalReaction direction="left-to-right" evidence="1">
        <dbReference type="Rhea" id="RHEA:29252"/>
    </physiologicalReaction>
</comment>
<comment type="subcellular location">
    <subcellularLocation>
        <location evidence="1">Cell inner membrane</location>
        <topology evidence="1">Multi-pass membrane protein</topology>
    </subcellularLocation>
</comment>
<comment type="similarity">
    <text evidence="1">Belongs to the NhaA Na(+)/H(+) (TC 2.A.33) antiporter family.</text>
</comment>
<dbReference type="EMBL" id="BX640423">
    <property type="protein sequence ID" value="CAE39954.1"/>
    <property type="molecule type" value="Genomic_DNA"/>
</dbReference>
<dbReference type="RefSeq" id="WP_003807230.1">
    <property type="nucleotide sequence ID" value="NC_002928.3"/>
</dbReference>
<dbReference type="SMR" id="Q7W1Y0"/>
<dbReference type="GeneID" id="93206444"/>
<dbReference type="KEGG" id="bpa:BPP0213"/>
<dbReference type="HOGENOM" id="CLU_015803_1_0_4"/>
<dbReference type="Proteomes" id="UP000001421">
    <property type="component" value="Chromosome"/>
</dbReference>
<dbReference type="GO" id="GO:0005886">
    <property type="term" value="C:plasma membrane"/>
    <property type="evidence" value="ECO:0007669"/>
    <property type="project" value="UniProtKB-SubCell"/>
</dbReference>
<dbReference type="GO" id="GO:0015385">
    <property type="term" value="F:sodium:proton antiporter activity"/>
    <property type="evidence" value="ECO:0007669"/>
    <property type="project" value="TreeGrafter"/>
</dbReference>
<dbReference type="GO" id="GO:0006885">
    <property type="term" value="P:regulation of pH"/>
    <property type="evidence" value="ECO:0007669"/>
    <property type="project" value="InterPro"/>
</dbReference>
<dbReference type="Gene3D" id="1.20.1530.10">
    <property type="entry name" value="Na+/H+ antiporter like domain"/>
    <property type="match status" value="1"/>
</dbReference>
<dbReference type="HAMAP" id="MF_01844">
    <property type="entry name" value="NhaA"/>
    <property type="match status" value="1"/>
</dbReference>
<dbReference type="InterPro" id="IPR023171">
    <property type="entry name" value="Na/H_antiporter_dom_sf"/>
</dbReference>
<dbReference type="InterPro" id="IPR004670">
    <property type="entry name" value="NhaA"/>
</dbReference>
<dbReference type="NCBIfam" id="TIGR00773">
    <property type="entry name" value="NhaA"/>
    <property type="match status" value="1"/>
</dbReference>
<dbReference type="NCBIfam" id="NF007111">
    <property type="entry name" value="PRK09560.1"/>
    <property type="match status" value="1"/>
</dbReference>
<dbReference type="NCBIfam" id="NF007112">
    <property type="entry name" value="PRK09561.1"/>
    <property type="match status" value="1"/>
</dbReference>
<dbReference type="PANTHER" id="PTHR30341:SF0">
    <property type="entry name" value="NA(+)_H(+) ANTIPORTER NHAA"/>
    <property type="match status" value="1"/>
</dbReference>
<dbReference type="PANTHER" id="PTHR30341">
    <property type="entry name" value="SODIUM ION/PROTON ANTIPORTER NHAA-RELATED"/>
    <property type="match status" value="1"/>
</dbReference>
<dbReference type="Pfam" id="PF06965">
    <property type="entry name" value="Na_H_antiport_1"/>
    <property type="match status" value="1"/>
</dbReference>
<keyword id="KW-0050">Antiport</keyword>
<keyword id="KW-0997">Cell inner membrane</keyword>
<keyword id="KW-1003">Cell membrane</keyword>
<keyword id="KW-0406">Ion transport</keyword>
<keyword id="KW-0472">Membrane</keyword>
<keyword id="KW-0915">Sodium</keyword>
<keyword id="KW-0739">Sodium transport</keyword>
<keyword id="KW-0812">Transmembrane</keyword>
<keyword id="KW-1133">Transmembrane helix</keyword>
<keyword id="KW-0813">Transport</keyword>
<proteinExistence type="inferred from homology"/>
<protein>
    <recommendedName>
        <fullName evidence="1">Na(+)/H(+) antiporter NhaA</fullName>
    </recommendedName>
    <alternativeName>
        <fullName evidence="1">Sodium/proton antiporter NhaA</fullName>
    </alternativeName>
</protein>
<organism>
    <name type="scientific">Bordetella parapertussis (strain 12822 / ATCC BAA-587 / NCTC 13253)</name>
    <dbReference type="NCBI Taxonomy" id="257311"/>
    <lineage>
        <taxon>Bacteria</taxon>
        <taxon>Pseudomonadati</taxon>
        <taxon>Pseudomonadota</taxon>
        <taxon>Betaproteobacteria</taxon>
        <taxon>Burkholderiales</taxon>
        <taxon>Alcaligenaceae</taxon>
        <taxon>Bordetella</taxon>
    </lineage>
</organism>
<feature type="chain" id="PRO_0000334243" description="Na(+)/H(+) antiporter NhaA">
    <location>
        <begin position="1"/>
        <end position="398"/>
    </location>
</feature>
<feature type="transmembrane region" description="Helical" evidence="1">
    <location>
        <begin position="21"/>
        <end position="41"/>
    </location>
</feature>
<feature type="transmembrane region" description="Helical" evidence="1">
    <location>
        <begin position="66"/>
        <end position="86"/>
    </location>
</feature>
<feature type="transmembrane region" description="Helical" evidence="1">
    <location>
        <begin position="101"/>
        <end position="121"/>
    </location>
</feature>
<feature type="transmembrane region" description="Helical" evidence="1">
    <location>
        <begin position="132"/>
        <end position="152"/>
    </location>
</feature>
<feature type="transmembrane region" description="Helical" evidence="1">
    <location>
        <begin position="161"/>
        <end position="181"/>
    </location>
</feature>
<feature type="transmembrane region" description="Helical" evidence="1">
    <location>
        <begin position="184"/>
        <end position="204"/>
    </location>
</feature>
<feature type="transmembrane region" description="Helical" evidence="1">
    <location>
        <begin position="216"/>
        <end position="236"/>
    </location>
</feature>
<feature type="transmembrane region" description="Helical" evidence="1">
    <location>
        <begin position="274"/>
        <end position="294"/>
    </location>
</feature>
<feature type="transmembrane region" description="Helical" evidence="1">
    <location>
        <begin position="305"/>
        <end position="325"/>
    </location>
</feature>
<feature type="transmembrane region" description="Helical" evidence="1">
    <location>
        <begin position="343"/>
        <end position="363"/>
    </location>
</feature>
<feature type="transmembrane region" description="Helical" evidence="1">
    <location>
        <begin position="374"/>
        <end position="394"/>
    </location>
</feature>
<reference key="1">
    <citation type="journal article" date="2003" name="Nat. Genet.">
        <title>Comparative analysis of the genome sequences of Bordetella pertussis, Bordetella parapertussis and Bordetella bronchiseptica.</title>
        <authorList>
            <person name="Parkhill J."/>
            <person name="Sebaihia M."/>
            <person name="Preston A."/>
            <person name="Murphy L.D."/>
            <person name="Thomson N.R."/>
            <person name="Harris D.E."/>
            <person name="Holden M.T.G."/>
            <person name="Churcher C.M."/>
            <person name="Bentley S.D."/>
            <person name="Mungall K.L."/>
            <person name="Cerdeno-Tarraga A.-M."/>
            <person name="Temple L."/>
            <person name="James K.D."/>
            <person name="Harris B."/>
            <person name="Quail M.A."/>
            <person name="Achtman M."/>
            <person name="Atkin R."/>
            <person name="Baker S."/>
            <person name="Basham D."/>
            <person name="Bason N."/>
            <person name="Cherevach I."/>
            <person name="Chillingworth T."/>
            <person name="Collins M."/>
            <person name="Cronin A."/>
            <person name="Davis P."/>
            <person name="Doggett J."/>
            <person name="Feltwell T."/>
            <person name="Goble A."/>
            <person name="Hamlin N."/>
            <person name="Hauser H."/>
            <person name="Holroyd S."/>
            <person name="Jagels K."/>
            <person name="Leather S."/>
            <person name="Moule S."/>
            <person name="Norberczak H."/>
            <person name="O'Neil S."/>
            <person name="Ormond D."/>
            <person name="Price C."/>
            <person name="Rabbinowitsch E."/>
            <person name="Rutter S."/>
            <person name="Sanders M."/>
            <person name="Saunders D."/>
            <person name="Seeger K."/>
            <person name="Sharp S."/>
            <person name="Simmonds M."/>
            <person name="Skelton J."/>
            <person name="Squares R."/>
            <person name="Squares S."/>
            <person name="Stevens K."/>
            <person name="Unwin L."/>
            <person name="Whitehead S."/>
            <person name="Barrell B.G."/>
            <person name="Maskell D.J."/>
        </authorList>
    </citation>
    <scope>NUCLEOTIDE SEQUENCE [LARGE SCALE GENOMIC DNA]</scope>
    <source>
        <strain>12822 / ATCC BAA-587 / NCTC 13253</strain>
    </source>
</reference>
<gene>
    <name evidence="1" type="primary">nhaA</name>
    <name type="ordered locus">BPP0213</name>
</gene>
<sequence length="398" mass="41497">MPTTPTRAPSLLQAFLRSEALGGYVLMIAAVLALIVANSPLAPAYFQLLGTKLGYASEAFTLKESVLHWINDGLMAVFFLLVGLEIKREMLDGQLRGVSRIVLPGVAAAGGMLMPALVYLLVNQGDPAGLRGWAIPAATDIAFALGILALLGSRVPTSLKIFLTALAILDDLGAIAIIAVFYTAELNTSALAAAGGLLAALCVLNRLRVLRLAPYLLVGALLWYFVLKSGVHATLAGVALALAIPLRRQDPRQPGAEHSPLHALEHALHRPVALLIVPVFGFANAGVSFDGMGIDSLTAPIPLGIALGLFLGKQLGVFGFAWLAIRTGLASMPRHASFAQLYGVALLCGIGFTMSLFIGALAFDDAATIDATKIGVLTGSLVSAVLGYALLRVLPPAD</sequence>
<accession>Q7W1Y0</accession>
<evidence type="ECO:0000255" key="1">
    <source>
        <dbReference type="HAMAP-Rule" id="MF_01844"/>
    </source>
</evidence>
<name>NHAA_BORPA</name>